<evidence type="ECO:0000255" key="1">
    <source>
        <dbReference type="HAMAP-Rule" id="MF_01445"/>
    </source>
</evidence>
<name>TSAD_BARBK</name>
<feature type="chain" id="PRO_0000303275" description="tRNA N6-adenosine threonylcarbamoyltransferase">
    <location>
        <begin position="1"/>
        <end position="364"/>
    </location>
</feature>
<feature type="binding site" evidence="1">
    <location>
        <position position="115"/>
    </location>
    <ligand>
        <name>Fe cation</name>
        <dbReference type="ChEBI" id="CHEBI:24875"/>
    </ligand>
</feature>
<feature type="binding site" evidence="1">
    <location>
        <position position="119"/>
    </location>
    <ligand>
        <name>Fe cation</name>
        <dbReference type="ChEBI" id="CHEBI:24875"/>
    </ligand>
</feature>
<feature type="binding site" evidence="1">
    <location>
        <begin position="137"/>
        <end position="141"/>
    </location>
    <ligand>
        <name>substrate</name>
    </ligand>
</feature>
<feature type="binding site" evidence="1">
    <location>
        <position position="170"/>
    </location>
    <ligand>
        <name>substrate</name>
    </ligand>
</feature>
<feature type="binding site" evidence="1">
    <location>
        <position position="183"/>
    </location>
    <ligand>
        <name>substrate</name>
    </ligand>
</feature>
<feature type="binding site" evidence="1">
    <location>
        <position position="288"/>
    </location>
    <ligand>
        <name>substrate</name>
    </ligand>
</feature>
<feature type="binding site" evidence="1">
    <location>
        <position position="316"/>
    </location>
    <ligand>
        <name>Fe cation</name>
        <dbReference type="ChEBI" id="CHEBI:24875"/>
    </ligand>
</feature>
<gene>
    <name evidence="1" type="primary">tsaD</name>
    <name type="synonym">gcp</name>
    <name type="ordered locus">BARBAKC583_0062</name>
</gene>
<protein>
    <recommendedName>
        <fullName evidence="1">tRNA N6-adenosine threonylcarbamoyltransferase</fullName>
        <ecNumber evidence="1">2.3.1.234</ecNumber>
    </recommendedName>
    <alternativeName>
        <fullName evidence="1">N6-L-threonylcarbamoyladenine synthase</fullName>
        <shortName evidence="1">t(6)A synthase</shortName>
    </alternativeName>
    <alternativeName>
        <fullName evidence="1">t(6)A37 threonylcarbamoyladenosine biosynthesis protein TsaD</fullName>
    </alternativeName>
    <alternativeName>
        <fullName evidence="1">tRNA threonylcarbamoyladenosine biosynthesis protein TsaD</fullName>
    </alternativeName>
</protein>
<keyword id="KW-0012">Acyltransferase</keyword>
<keyword id="KW-0963">Cytoplasm</keyword>
<keyword id="KW-0408">Iron</keyword>
<keyword id="KW-0479">Metal-binding</keyword>
<keyword id="KW-0808">Transferase</keyword>
<keyword id="KW-0819">tRNA processing</keyword>
<reference key="1">
    <citation type="submission" date="2006-12" db="EMBL/GenBank/DDBJ databases">
        <authorList>
            <person name="Hendrix L."/>
            <person name="Mohamoud Y."/>
            <person name="Radune D."/>
            <person name="Shvartsbeyn A."/>
            <person name="Daugherty S."/>
            <person name="Dodson R."/>
            <person name="Durkin A.S."/>
            <person name="Harkins D."/>
            <person name="Huot H."/>
            <person name="Kothari S.P."/>
            <person name="Madupu R."/>
            <person name="Li J."/>
            <person name="Nelson W.C."/>
            <person name="Shrivastava S."/>
            <person name="Giglio M.G."/>
            <person name="Haft D."/>
            <person name="Selengut J."/>
            <person name="Fraser-Ligget C."/>
            <person name="Seshadri R."/>
        </authorList>
    </citation>
    <scope>NUCLEOTIDE SEQUENCE [LARGE SCALE GENOMIC DNA]</scope>
    <source>
        <strain>ATCC 35685 / KC583 / Herrer 020/F12,63</strain>
    </source>
</reference>
<organism>
    <name type="scientific">Bartonella bacilliformis (strain ATCC 35685 / KC583 / Herrer 020/F12,63)</name>
    <dbReference type="NCBI Taxonomy" id="360095"/>
    <lineage>
        <taxon>Bacteria</taxon>
        <taxon>Pseudomonadati</taxon>
        <taxon>Pseudomonadota</taxon>
        <taxon>Alphaproteobacteria</taxon>
        <taxon>Hyphomicrobiales</taxon>
        <taxon>Bartonellaceae</taxon>
        <taxon>Bartonella</taxon>
    </lineage>
</organism>
<comment type="function">
    <text evidence="1">Required for the formation of a threonylcarbamoyl group on adenosine at position 37 (t(6)A37) in tRNAs that read codons beginning with adenine. Is involved in the transfer of the threonylcarbamoyl moiety of threonylcarbamoyl-AMP (TC-AMP) to the N6 group of A37, together with TsaE and TsaB. TsaD likely plays a direct catalytic role in this reaction.</text>
</comment>
<comment type="catalytic activity">
    <reaction evidence="1">
        <text>L-threonylcarbamoyladenylate + adenosine(37) in tRNA = N(6)-L-threonylcarbamoyladenosine(37) in tRNA + AMP + H(+)</text>
        <dbReference type="Rhea" id="RHEA:37059"/>
        <dbReference type="Rhea" id="RHEA-COMP:10162"/>
        <dbReference type="Rhea" id="RHEA-COMP:10163"/>
        <dbReference type="ChEBI" id="CHEBI:15378"/>
        <dbReference type="ChEBI" id="CHEBI:73682"/>
        <dbReference type="ChEBI" id="CHEBI:74411"/>
        <dbReference type="ChEBI" id="CHEBI:74418"/>
        <dbReference type="ChEBI" id="CHEBI:456215"/>
        <dbReference type="EC" id="2.3.1.234"/>
    </reaction>
</comment>
<comment type="cofactor">
    <cofactor evidence="1">
        <name>Fe(2+)</name>
        <dbReference type="ChEBI" id="CHEBI:29033"/>
    </cofactor>
    <text evidence="1">Binds 1 Fe(2+) ion per subunit.</text>
</comment>
<comment type="subcellular location">
    <subcellularLocation>
        <location evidence="1">Cytoplasm</location>
    </subcellularLocation>
</comment>
<comment type="similarity">
    <text evidence="1">Belongs to the KAE1 / TsaD family.</text>
</comment>
<proteinExistence type="inferred from homology"/>
<dbReference type="EC" id="2.3.1.234" evidence="1"/>
<dbReference type="EMBL" id="CP000524">
    <property type="protein sequence ID" value="ABM45612.1"/>
    <property type="molecule type" value="Genomic_DNA"/>
</dbReference>
<dbReference type="RefSeq" id="WP_005765789.1">
    <property type="nucleotide sequence ID" value="NC_008783.1"/>
</dbReference>
<dbReference type="SMR" id="A1UQZ7"/>
<dbReference type="STRING" id="360095.BARBAKC583_0062"/>
<dbReference type="GeneID" id="4684442"/>
<dbReference type="KEGG" id="bbk:BARBAKC583_0062"/>
<dbReference type="PATRIC" id="fig|360095.6.peg.61"/>
<dbReference type="eggNOG" id="COG0533">
    <property type="taxonomic scope" value="Bacteria"/>
</dbReference>
<dbReference type="HOGENOM" id="CLU_023208_0_2_5"/>
<dbReference type="OrthoDB" id="9806197at2"/>
<dbReference type="Proteomes" id="UP000000643">
    <property type="component" value="Chromosome"/>
</dbReference>
<dbReference type="GO" id="GO:0005737">
    <property type="term" value="C:cytoplasm"/>
    <property type="evidence" value="ECO:0007669"/>
    <property type="project" value="UniProtKB-SubCell"/>
</dbReference>
<dbReference type="GO" id="GO:0005506">
    <property type="term" value="F:iron ion binding"/>
    <property type="evidence" value="ECO:0007669"/>
    <property type="project" value="UniProtKB-UniRule"/>
</dbReference>
<dbReference type="GO" id="GO:0061711">
    <property type="term" value="F:N(6)-L-threonylcarbamoyladenine synthase activity"/>
    <property type="evidence" value="ECO:0007669"/>
    <property type="project" value="UniProtKB-EC"/>
</dbReference>
<dbReference type="GO" id="GO:0002949">
    <property type="term" value="P:tRNA threonylcarbamoyladenosine modification"/>
    <property type="evidence" value="ECO:0007669"/>
    <property type="project" value="UniProtKB-UniRule"/>
</dbReference>
<dbReference type="CDD" id="cd24133">
    <property type="entry name" value="ASKHA_NBD_TsaD_bac"/>
    <property type="match status" value="1"/>
</dbReference>
<dbReference type="FunFam" id="3.30.420.40:FF:000012">
    <property type="entry name" value="tRNA N6-adenosine threonylcarbamoyltransferase"/>
    <property type="match status" value="1"/>
</dbReference>
<dbReference type="Gene3D" id="3.30.420.40">
    <property type="match status" value="2"/>
</dbReference>
<dbReference type="HAMAP" id="MF_01445">
    <property type="entry name" value="TsaD"/>
    <property type="match status" value="1"/>
</dbReference>
<dbReference type="InterPro" id="IPR043129">
    <property type="entry name" value="ATPase_NBD"/>
</dbReference>
<dbReference type="InterPro" id="IPR000905">
    <property type="entry name" value="Gcp-like_dom"/>
</dbReference>
<dbReference type="InterPro" id="IPR017861">
    <property type="entry name" value="KAE1/TsaD"/>
</dbReference>
<dbReference type="InterPro" id="IPR022450">
    <property type="entry name" value="TsaD"/>
</dbReference>
<dbReference type="NCBIfam" id="TIGR00329">
    <property type="entry name" value="gcp_kae1"/>
    <property type="match status" value="1"/>
</dbReference>
<dbReference type="NCBIfam" id="TIGR03723">
    <property type="entry name" value="T6A_TsaD_YgjD"/>
    <property type="match status" value="1"/>
</dbReference>
<dbReference type="PANTHER" id="PTHR11735">
    <property type="entry name" value="TRNA N6-ADENOSINE THREONYLCARBAMOYLTRANSFERASE"/>
    <property type="match status" value="1"/>
</dbReference>
<dbReference type="PANTHER" id="PTHR11735:SF6">
    <property type="entry name" value="TRNA N6-ADENOSINE THREONYLCARBAMOYLTRANSFERASE, MITOCHONDRIAL"/>
    <property type="match status" value="1"/>
</dbReference>
<dbReference type="Pfam" id="PF00814">
    <property type="entry name" value="TsaD"/>
    <property type="match status" value="1"/>
</dbReference>
<dbReference type="PRINTS" id="PR00789">
    <property type="entry name" value="OSIALOPTASE"/>
</dbReference>
<dbReference type="SUPFAM" id="SSF53067">
    <property type="entry name" value="Actin-like ATPase domain"/>
    <property type="match status" value="2"/>
</dbReference>
<sequence>MRLLGIETSCDETATAVIEHNLKGKSHILSNIVWSQIEDHAPYGGVVPEIAARAHVEILDTLILEALAKAKTTLKEIDAIAVTGGPGLIGGLLVGLMSAKALAFATGKPFIAVNHLEGHALTAVLTHQVTFPYLLLLVSGGHTQMILVHGVGNYQRLGTTFDDALGEAFDKTAKLLGLPYPGGPALEKAALLGDKNRIPLPRPLKGNKQLNFSFSGLKTAVRQAATAMAPLSEQDVSDIAASFQAAVIDTLQDRVHLALQYFTSQYPSSHNQEHRPPAFVVAGGVAANQAIRLTLQNLAHQHSFEFIAPPPSLCTDNAAMIAFAGAERIARGQTSPLDIAPRSRWPLDENALPLIGTGRRGAKV</sequence>
<accession>A1UQZ7</accession>